<keyword id="KW-0687">Ribonucleoprotein</keyword>
<keyword id="KW-0689">Ribosomal protein</keyword>
<keyword id="KW-0694">RNA-binding</keyword>
<keyword id="KW-0699">rRNA-binding</keyword>
<sequence>MVDINQIPTRRPFHRRRKTCPFSGANAPKIDYKDVRLLQRYISERGKIVPSRITAVSQKKQRELAKAIKRARFLGLLPYVVR</sequence>
<proteinExistence type="inferred from homology"/>
<protein>
    <recommendedName>
        <fullName evidence="1">Small ribosomal subunit protein bS18</fullName>
    </recommendedName>
    <alternativeName>
        <fullName evidence="3">30S ribosomal protein S18</fullName>
    </alternativeName>
</protein>
<feature type="chain" id="PRO_0000111213" description="Small ribosomal subunit protein bS18">
    <location>
        <begin position="1"/>
        <end position="82"/>
    </location>
</feature>
<feature type="region of interest" description="Disordered" evidence="2">
    <location>
        <begin position="1"/>
        <end position="20"/>
    </location>
</feature>
<reference key="1">
    <citation type="journal article" date="2000" name="DNA Res.">
        <title>Complete genome structure of the nitrogen-fixing symbiotic bacterium Mesorhizobium loti.</title>
        <authorList>
            <person name="Kaneko T."/>
            <person name="Nakamura Y."/>
            <person name="Sato S."/>
            <person name="Asamizu E."/>
            <person name="Kato T."/>
            <person name="Sasamoto S."/>
            <person name="Watanabe A."/>
            <person name="Idesawa K."/>
            <person name="Ishikawa A."/>
            <person name="Kawashima K."/>
            <person name="Kimura T."/>
            <person name="Kishida Y."/>
            <person name="Kiyokawa C."/>
            <person name="Kohara M."/>
            <person name="Matsumoto M."/>
            <person name="Matsuno A."/>
            <person name="Mochizuki Y."/>
            <person name="Nakayama S."/>
            <person name="Nakazaki N."/>
            <person name="Shimpo S."/>
            <person name="Sugimoto M."/>
            <person name="Takeuchi C."/>
            <person name="Yamada M."/>
            <person name="Tabata S."/>
        </authorList>
    </citation>
    <scope>NUCLEOTIDE SEQUENCE [LARGE SCALE GENOMIC DNA]</scope>
    <source>
        <strain>LMG 29417 / CECT 9101 / MAFF 303099</strain>
    </source>
</reference>
<name>RS18_RHILO</name>
<gene>
    <name evidence="1" type="primary">rpsR</name>
    <name type="ordered locus">msl7844</name>
</gene>
<comment type="function">
    <text evidence="1">Binds as a heterodimer with protein bS6 to the central domain of the 16S rRNA, where it helps stabilize the platform of the 30S subunit.</text>
</comment>
<comment type="subunit">
    <text evidence="1">Part of the 30S ribosomal subunit. Forms a tight heterodimer with protein bS6.</text>
</comment>
<comment type="similarity">
    <text evidence="1">Belongs to the bacterial ribosomal protein bS18 family.</text>
</comment>
<accession>Q984T9</accession>
<evidence type="ECO:0000255" key="1">
    <source>
        <dbReference type="HAMAP-Rule" id="MF_00270"/>
    </source>
</evidence>
<evidence type="ECO:0000256" key="2">
    <source>
        <dbReference type="SAM" id="MobiDB-lite"/>
    </source>
</evidence>
<evidence type="ECO:0000305" key="3"/>
<dbReference type="EMBL" id="BA000012">
    <property type="protein sequence ID" value="BAB54224.1"/>
    <property type="molecule type" value="Genomic_DNA"/>
</dbReference>
<dbReference type="RefSeq" id="WP_006203718.1">
    <property type="nucleotide sequence ID" value="NC_002678.2"/>
</dbReference>
<dbReference type="SMR" id="Q984T9"/>
<dbReference type="GeneID" id="91560370"/>
<dbReference type="KEGG" id="mlo:msl7844"/>
<dbReference type="eggNOG" id="COG0238">
    <property type="taxonomic scope" value="Bacteria"/>
</dbReference>
<dbReference type="HOGENOM" id="CLU_148710_2_2_5"/>
<dbReference type="Proteomes" id="UP000000552">
    <property type="component" value="Chromosome"/>
</dbReference>
<dbReference type="GO" id="GO:0022627">
    <property type="term" value="C:cytosolic small ribosomal subunit"/>
    <property type="evidence" value="ECO:0007669"/>
    <property type="project" value="TreeGrafter"/>
</dbReference>
<dbReference type="GO" id="GO:0070181">
    <property type="term" value="F:small ribosomal subunit rRNA binding"/>
    <property type="evidence" value="ECO:0007669"/>
    <property type="project" value="TreeGrafter"/>
</dbReference>
<dbReference type="GO" id="GO:0003735">
    <property type="term" value="F:structural constituent of ribosome"/>
    <property type="evidence" value="ECO:0007669"/>
    <property type="project" value="InterPro"/>
</dbReference>
<dbReference type="GO" id="GO:0006412">
    <property type="term" value="P:translation"/>
    <property type="evidence" value="ECO:0007669"/>
    <property type="project" value="UniProtKB-UniRule"/>
</dbReference>
<dbReference type="Gene3D" id="4.10.640.10">
    <property type="entry name" value="Ribosomal protein S18"/>
    <property type="match status" value="1"/>
</dbReference>
<dbReference type="HAMAP" id="MF_00270">
    <property type="entry name" value="Ribosomal_bS18"/>
    <property type="match status" value="1"/>
</dbReference>
<dbReference type="InterPro" id="IPR001648">
    <property type="entry name" value="Ribosomal_bS18"/>
</dbReference>
<dbReference type="InterPro" id="IPR018275">
    <property type="entry name" value="Ribosomal_bS18_CS"/>
</dbReference>
<dbReference type="InterPro" id="IPR036870">
    <property type="entry name" value="Ribosomal_bS18_sf"/>
</dbReference>
<dbReference type="NCBIfam" id="TIGR00165">
    <property type="entry name" value="S18"/>
    <property type="match status" value="1"/>
</dbReference>
<dbReference type="PANTHER" id="PTHR13479">
    <property type="entry name" value="30S RIBOSOMAL PROTEIN S18"/>
    <property type="match status" value="1"/>
</dbReference>
<dbReference type="PANTHER" id="PTHR13479:SF40">
    <property type="entry name" value="SMALL RIBOSOMAL SUBUNIT PROTEIN BS18M"/>
    <property type="match status" value="1"/>
</dbReference>
<dbReference type="Pfam" id="PF01084">
    <property type="entry name" value="Ribosomal_S18"/>
    <property type="match status" value="1"/>
</dbReference>
<dbReference type="PRINTS" id="PR00974">
    <property type="entry name" value="RIBOSOMALS18"/>
</dbReference>
<dbReference type="SUPFAM" id="SSF46911">
    <property type="entry name" value="Ribosomal protein S18"/>
    <property type="match status" value="1"/>
</dbReference>
<dbReference type="PROSITE" id="PS00057">
    <property type="entry name" value="RIBOSOMAL_S18"/>
    <property type="match status" value="1"/>
</dbReference>
<organism>
    <name type="scientific">Mesorhizobium japonicum (strain LMG 29417 / CECT 9101 / MAFF 303099)</name>
    <name type="common">Mesorhizobium loti (strain MAFF 303099)</name>
    <dbReference type="NCBI Taxonomy" id="266835"/>
    <lineage>
        <taxon>Bacteria</taxon>
        <taxon>Pseudomonadati</taxon>
        <taxon>Pseudomonadota</taxon>
        <taxon>Alphaproteobacteria</taxon>
        <taxon>Hyphomicrobiales</taxon>
        <taxon>Phyllobacteriaceae</taxon>
        <taxon>Mesorhizobium</taxon>
    </lineage>
</organism>